<feature type="chain" id="PRO_0000417797" description="CASP-like protein 2U3">
    <location>
        <begin position="1"/>
        <end position="178"/>
    </location>
</feature>
<feature type="topological domain" description="Cytoplasmic" evidence="2">
    <location>
        <begin position="1"/>
        <end position="4"/>
    </location>
</feature>
<feature type="transmembrane region" description="Helical" evidence="2">
    <location>
        <begin position="5"/>
        <end position="25"/>
    </location>
</feature>
<feature type="topological domain" description="Extracellular" evidence="2">
    <location>
        <begin position="26"/>
        <end position="52"/>
    </location>
</feature>
<feature type="transmembrane region" description="Helical" evidence="2">
    <location>
        <begin position="53"/>
        <end position="73"/>
    </location>
</feature>
<feature type="topological domain" description="Cytoplasmic" evidence="2">
    <location>
        <begin position="74"/>
        <end position="80"/>
    </location>
</feature>
<feature type="transmembrane region" description="Helical" evidence="2">
    <location>
        <begin position="81"/>
        <end position="101"/>
    </location>
</feature>
<feature type="topological domain" description="Extracellular" evidence="2">
    <location>
        <begin position="102"/>
        <end position="132"/>
    </location>
</feature>
<feature type="transmembrane region" description="Helical" evidence="2">
    <location>
        <begin position="133"/>
        <end position="153"/>
    </location>
</feature>
<feature type="topological domain" description="Cytoplasmic" evidence="2">
    <location>
        <begin position="154"/>
        <end position="178"/>
    </location>
</feature>
<proteinExistence type="inferred from homology"/>
<accession>P0DI25</accession>
<keyword id="KW-1003">Cell membrane</keyword>
<keyword id="KW-0472">Membrane</keyword>
<keyword id="KW-0812">Transmembrane</keyword>
<keyword id="KW-1133">Transmembrane helix</keyword>
<evidence type="ECO:0000250" key="1"/>
<evidence type="ECO:0000255" key="2"/>
<evidence type="ECO:0000305" key="3"/>
<gene>
    <name type="ORF">PtaqContig2897</name>
</gene>
<protein>
    <recommendedName>
        <fullName>CASP-like protein 2U3</fullName>
        <shortName>PaCASPL2U3</shortName>
    </recommendedName>
</protein>
<sequence>MACRVMEVLLRVLAILLSIAGALVMAKDKQDTFVMLGTVPVPLYARHSYVEAFVFLVYANGIVAIYCFIAVLLSLLAKSRVLAGLLFFMDQALAYLLLAAAAASTEVAYIAKRGEKKLVWGEVCSNFEHFCNLVGVSLVLTFLSVLVLVTLAILSGKRLFGHPPLCAPPSTPPVHQGV</sequence>
<name>CSPL4_PTEAA</name>
<organism>
    <name type="scientific">Pteridium aquilinum subsp. aquilinum</name>
    <name type="common">Bracken fern</name>
    <dbReference type="NCBI Taxonomy" id="104588"/>
    <lineage>
        <taxon>Eukaryota</taxon>
        <taxon>Viridiplantae</taxon>
        <taxon>Streptophyta</taxon>
        <taxon>Embryophyta</taxon>
        <taxon>Tracheophyta</taxon>
        <taxon>Polypodiopsida</taxon>
        <taxon>Polypodiidae</taxon>
        <taxon>Polypodiales</taxon>
        <taxon>Dennstaedtiineae</taxon>
        <taxon>Dennstaedtiaceae</taxon>
        <taxon>Pteridium</taxon>
    </lineage>
</organism>
<reference key="1">
    <citation type="journal article" date="2011" name="BMC Genomics">
        <title>De novo characterization of the gametophyte transcriptome in bracken fern, Pteridium aquilinum.</title>
        <authorList>
            <person name="Der J.P."/>
            <person name="Barker M.S."/>
            <person name="Wickett N.J."/>
            <person name="dePamphilis C.W."/>
            <person name="Wolf P.G."/>
        </authorList>
    </citation>
    <scope>NUCLEOTIDE SEQUENCE [LARGE SCALE MRNA]</scope>
    <source>
        <strain>Wolf 83</strain>
        <tissue>Gametophyte</tissue>
    </source>
</reference>
<reference key="2">
    <citation type="journal article" date="2014" name="Plant Physiol.">
        <title>Functional and evolutionary analysis of the CASPARIAN STRIP MEMBRANE DOMAIN PROTEIN family.</title>
        <authorList>
            <person name="Roppolo D."/>
            <person name="Boeckmann B."/>
            <person name="Pfister A."/>
            <person name="Boutet E."/>
            <person name="Rubio M.C."/>
            <person name="Denervaud-Tendon V."/>
            <person name="Vermeer J.E."/>
            <person name="Gheyselinck J."/>
            <person name="Xenarios I."/>
            <person name="Geldner N."/>
        </authorList>
    </citation>
    <scope>GENE FAMILY</scope>
    <scope>NOMENCLATURE</scope>
</reference>
<dbReference type="SMR" id="P0DI25"/>
<dbReference type="GO" id="GO:0005886">
    <property type="term" value="C:plasma membrane"/>
    <property type="evidence" value="ECO:0007669"/>
    <property type="project" value="UniProtKB-SubCell"/>
</dbReference>
<dbReference type="InterPro" id="IPR006459">
    <property type="entry name" value="CASP/CASPL"/>
</dbReference>
<dbReference type="InterPro" id="IPR006702">
    <property type="entry name" value="CASP_dom"/>
</dbReference>
<dbReference type="InterPro" id="IPR044173">
    <property type="entry name" value="CASPL"/>
</dbReference>
<dbReference type="NCBIfam" id="TIGR01569">
    <property type="entry name" value="A_tha_TIGR01569"/>
    <property type="match status" value="1"/>
</dbReference>
<dbReference type="PANTHER" id="PTHR36488">
    <property type="entry name" value="CASP-LIKE PROTEIN 1U1"/>
    <property type="match status" value="1"/>
</dbReference>
<dbReference type="PANTHER" id="PTHR36488:SF8">
    <property type="entry name" value="CASP-LIKE PROTEIN 1U1"/>
    <property type="match status" value="1"/>
</dbReference>
<dbReference type="Pfam" id="PF04535">
    <property type="entry name" value="CASP_dom"/>
    <property type="match status" value="1"/>
</dbReference>
<comment type="subunit">
    <text evidence="1">Homodimer and heterodimers.</text>
</comment>
<comment type="subcellular location">
    <subcellularLocation>
        <location evidence="1">Cell membrane</location>
        <topology evidence="1">Multi-pass membrane protein</topology>
    </subcellularLocation>
</comment>
<comment type="similarity">
    <text evidence="3">Belongs to the Casparian strip membrane proteins (CASP) family.</text>
</comment>